<gene>
    <name evidence="5" type="primary">Ugt1a3</name>
    <name type="synonym">Ugt1</name>
</gene>
<protein>
    <recommendedName>
        <fullName evidence="2">UDP-glucuronosyltransferase 1A3</fullName>
        <shortName evidence="2">UGT1A3</shortName>
        <ecNumber evidence="2">2.4.1.17</ecNumber>
    </recommendedName>
    <alternativeName>
        <fullName>B3</fullName>
    </alternativeName>
    <alternativeName>
        <fullName>UDP-glucuronosyltransferase 1-3</fullName>
        <shortName>UDPGT 1-3</shortName>
        <shortName>UGT1*3</shortName>
        <shortName>UGT1-03</shortName>
        <shortName>UGT1.3</shortName>
    </alternativeName>
</protein>
<proteinExistence type="evidence at transcript level"/>
<organism>
    <name type="scientific">Rattus norvegicus</name>
    <name type="common">Rat</name>
    <dbReference type="NCBI Taxonomy" id="10116"/>
    <lineage>
        <taxon>Eukaryota</taxon>
        <taxon>Metazoa</taxon>
        <taxon>Chordata</taxon>
        <taxon>Craniata</taxon>
        <taxon>Vertebrata</taxon>
        <taxon>Euteleostomi</taxon>
        <taxon>Mammalia</taxon>
        <taxon>Eutheria</taxon>
        <taxon>Euarchontoglires</taxon>
        <taxon>Glires</taxon>
        <taxon>Rodentia</taxon>
        <taxon>Myomorpha</taxon>
        <taxon>Muroidea</taxon>
        <taxon>Muridae</taxon>
        <taxon>Murinae</taxon>
        <taxon>Rattus</taxon>
    </lineage>
</organism>
<dbReference type="EC" id="2.4.1.17" evidence="2"/>
<dbReference type="EMBL" id="D38067">
    <property type="protein sequence ID" value="BAA07262.1"/>
    <property type="molecule type" value="Genomic_DNA"/>
</dbReference>
<dbReference type="EMBL" id="M34007">
    <property type="protein sequence ID" value="AAA42312.1"/>
    <property type="status" value="ALT_TERM"/>
    <property type="molecule type" value="mRNA"/>
</dbReference>
<dbReference type="SMR" id="Q64637"/>
<dbReference type="FunCoup" id="Q64637">
    <property type="interactions" value="15"/>
</dbReference>
<dbReference type="CAZy" id="GT1">
    <property type="family name" value="Glycosyltransferase Family 1"/>
</dbReference>
<dbReference type="GlyCosmos" id="Q64637">
    <property type="glycosylation" value="4 sites, No reported glycans"/>
</dbReference>
<dbReference type="GlyGen" id="Q64637">
    <property type="glycosylation" value="4 sites"/>
</dbReference>
<dbReference type="PhosphoSitePlus" id="Q64637"/>
<dbReference type="AGR" id="RGD:1549728"/>
<dbReference type="RGD" id="1549728">
    <property type="gene designation" value="Ugt1a3"/>
</dbReference>
<dbReference type="InParanoid" id="Q64637"/>
<dbReference type="BRENDA" id="2.4.1.17">
    <property type="organism ID" value="5301"/>
</dbReference>
<dbReference type="Reactome" id="R-RNO-156588">
    <property type="pathway name" value="Glucuronidation"/>
</dbReference>
<dbReference type="Reactome" id="R-RNO-189483">
    <property type="pathway name" value="Heme degradation"/>
</dbReference>
<dbReference type="Reactome" id="R-RNO-9749641">
    <property type="pathway name" value="Aspirin ADME"/>
</dbReference>
<dbReference type="Reactome" id="R-RNO-9754706">
    <property type="pathway name" value="Atorvastatin ADME"/>
</dbReference>
<dbReference type="Reactome" id="R-RNO-9757110">
    <property type="pathway name" value="Prednisone ADME"/>
</dbReference>
<dbReference type="PRO" id="PR:Q64637"/>
<dbReference type="Proteomes" id="UP000002494">
    <property type="component" value="Unplaced"/>
</dbReference>
<dbReference type="GO" id="GO:0005783">
    <property type="term" value="C:endoplasmic reticulum"/>
    <property type="evidence" value="ECO:0000318"/>
    <property type="project" value="GO_Central"/>
</dbReference>
<dbReference type="GO" id="GO:0005789">
    <property type="term" value="C:endoplasmic reticulum membrane"/>
    <property type="evidence" value="ECO:0007669"/>
    <property type="project" value="UniProtKB-SubCell"/>
</dbReference>
<dbReference type="GO" id="GO:0019899">
    <property type="term" value="F:enzyme binding"/>
    <property type="evidence" value="ECO:0000318"/>
    <property type="project" value="GO_Central"/>
</dbReference>
<dbReference type="GO" id="GO:0015020">
    <property type="term" value="F:glucuronosyltransferase activity"/>
    <property type="evidence" value="ECO:0000250"/>
    <property type="project" value="UniProtKB"/>
</dbReference>
<dbReference type="GO" id="GO:0031100">
    <property type="term" value="P:animal organ regeneration"/>
    <property type="evidence" value="ECO:0000270"/>
    <property type="project" value="RGD"/>
</dbReference>
<dbReference type="GO" id="GO:0032782">
    <property type="term" value="P:bile acid secretion"/>
    <property type="evidence" value="ECO:0000250"/>
    <property type="project" value="UniProtKB"/>
</dbReference>
<dbReference type="GO" id="GO:0008210">
    <property type="term" value="P:estrogen metabolic process"/>
    <property type="evidence" value="ECO:0000250"/>
    <property type="project" value="UniProtKB"/>
</dbReference>
<dbReference type="GO" id="GO:0070640">
    <property type="term" value="P:vitamin D3 metabolic process"/>
    <property type="evidence" value="ECO:0000250"/>
    <property type="project" value="UniProtKB"/>
</dbReference>
<dbReference type="CDD" id="cd03784">
    <property type="entry name" value="GT1_Gtf-like"/>
    <property type="match status" value="1"/>
</dbReference>
<dbReference type="FunFam" id="3.40.50.2000:FF:000001">
    <property type="entry name" value="UDP-glucuronosyltransferase"/>
    <property type="match status" value="1"/>
</dbReference>
<dbReference type="FunFam" id="3.40.50.2000:FF:000066">
    <property type="entry name" value="UDP-glucuronosyltransferase 1-1"/>
    <property type="match status" value="1"/>
</dbReference>
<dbReference type="Gene3D" id="3.40.50.2000">
    <property type="entry name" value="Glycogen Phosphorylase B"/>
    <property type="match status" value="2"/>
</dbReference>
<dbReference type="InterPro" id="IPR050271">
    <property type="entry name" value="UDP-glycosyltransferase"/>
</dbReference>
<dbReference type="InterPro" id="IPR002213">
    <property type="entry name" value="UDP_glucos_trans"/>
</dbReference>
<dbReference type="InterPro" id="IPR035595">
    <property type="entry name" value="UDP_glycos_trans_CS"/>
</dbReference>
<dbReference type="PANTHER" id="PTHR48043">
    <property type="entry name" value="EG:EG0003.4 PROTEIN-RELATED"/>
    <property type="match status" value="1"/>
</dbReference>
<dbReference type="PANTHER" id="PTHR48043:SF161">
    <property type="entry name" value="UDP GLUCURONOSYLTRANSFERASE FAMILY 1 MEMBER A1"/>
    <property type="match status" value="1"/>
</dbReference>
<dbReference type="Pfam" id="PF00201">
    <property type="entry name" value="UDPGT"/>
    <property type="match status" value="1"/>
</dbReference>
<dbReference type="SUPFAM" id="SSF53756">
    <property type="entry name" value="UDP-Glycosyltransferase/glycogen phosphorylase"/>
    <property type="match status" value="1"/>
</dbReference>
<dbReference type="PROSITE" id="PS00375">
    <property type="entry name" value="UDPGT"/>
    <property type="match status" value="1"/>
</dbReference>
<comment type="function">
    <text evidence="2">UDP-glucuronosyltransferase (UGT) that catalyzes phase II biotransformation reactions in which lipophilic substrates are conjugated with glucuronic acid to increase the metabolite's water solubility, thereby facilitating excretion into either the urine or bile. Essential for the elimination and detoxification of drugs, xenobiotics and endogenous compounds. Catalyzes the glucuronidation of endogenous estrogen hormones such as estradiol and estrone. Contributes to bile acid (BA) detoxification by catalyzing the glucuronidation of BA substrates, which are natural detergents for dietary lipids absorption. Involved in the glucuronidation of calcidiol, which is the major circulating form of vitamin D3, essential for the regulation of calcium and phosphate homeostasis. Involved in the glucuronidation of the phytochemical ferulic acid at the phenolic or the carboxylic acid group. Involved in the glucuronidation of the AGTR1 angiotensin receptor antagonists losartan, candesartan and zolarsartan, which can inhibit the effect of angiotensin II.</text>
</comment>
<comment type="catalytic activity">
    <reaction evidence="2">
        <text>glucuronate acceptor + UDP-alpha-D-glucuronate = acceptor beta-D-glucuronoside + UDP + H(+)</text>
        <dbReference type="Rhea" id="RHEA:21032"/>
        <dbReference type="ChEBI" id="CHEBI:15378"/>
        <dbReference type="ChEBI" id="CHEBI:58052"/>
        <dbReference type="ChEBI" id="CHEBI:58223"/>
        <dbReference type="ChEBI" id="CHEBI:132367"/>
        <dbReference type="ChEBI" id="CHEBI:132368"/>
        <dbReference type="EC" id="2.4.1.17"/>
    </reaction>
    <physiologicalReaction direction="left-to-right" evidence="2">
        <dbReference type="Rhea" id="RHEA:21033"/>
    </physiologicalReaction>
</comment>
<comment type="catalytic activity">
    <reaction evidence="2">
        <text>17beta-estradiol + UDP-alpha-D-glucuronate = 17beta-estradiol 3-O-(beta-D-glucuronate) + UDP + H(+)</text>
        <dbReference type="Rhea" id="RHEA:52460"/>
        <dbReference type="ChEBI" id="CHEBI:15378"/>
        <dbReference type="ChEBI" id="CHEBI:16469"/>
        <dbReference type="ChEBI" id="CHEBI:58052"/>
        <dbReference type="ChEBI" id="CHEBI:58223"/>
        <dbReference type="ChEBI" id="CHEBI:136641"/>
    </reaction>
    <physiologicalReaction direction="left-to-right" evidence="2">
        <dbReference type="Rhea" id="RHEA:52461"/>
    </physiologicalReaction>
</comment>
<comment type="catalytic activity">
    <reaction evidence="2">
        <text>17beta-estradiol + UDP-alpha-D-glucuronate = 17beta-estradiol 17-O-(beta-D-glucuronate) + UDP + H(+)</text>
        <dbReference type="Rhea" id="RHEA:52464"/>
        <dbReference type="ChEBI" id="CHEBI:15378"/>
        <dbReference type="ChEBI" id="CHEBI:16469"/>
        <dbReference type="ChEBI" id="CHEBI:58052"/>
        <dbReference type="ChEBI" id="CHEBI:58223"/>
        <dbReference type="ChEBI" id="CHEBI:82961"/>
    </reaction>
    <physiologicalReaction direction="left-to-right" evidence="2">
        <dbReference type="Rhea" id="RHEA:52465"/>
    </physiologicalReaction>
</comment>
<comment type="catalytic activity">
    <reaction evidence="2">
        <text>17alpha-estradiol + UDP-alpha-D-glucuronate = 17alpha-estradiol 3-O-(beta-D-glucuronate) + UDP + H(+)</text>
        <dbReference type="Rhea" id="RHEA:52868"/>
        <dbReference type="ChEBI" id="CHEBI:15378"/>
        <dbReference type="ChEBI" id="CHEBI:17160"/>
        <dbReference type="ChEBI" id="CHEBI:57529"/>
        <dbReference type="ChEBI" id="CHEBI:58052"/>
        <dbReference type="ChEBI" id="CHEBI:58223"/>
    </reaction>
    <physiologicalReaction direction="left-to-right" evidence="2">
        <dbReference type="Rhea" id="RHEA:52869"/>
    </physiologicalReaction>
</comment>
<comment type="catalytic activity">
    <reaction evidence="2">
        <text>estrone + UDP-alpha-D-glucuronate = estrone 3-O-(beta-D-glucuronate) + UDP + H(+)</text>
        <dbReference type="Rhea" id="RHEA:52476"/>
        <dbReference type="ChEBI" id="CHEBI:15378"/>
        <dbReference type="ChEBI" id="CHEBI:17263"/>
        <dbReference type="ChEBI" id="CHEBI:58052"/>
        <dbReference type="ChEBI" id="CHEBI:58223"/>
        <dbReference type="ChEBI" id="CHEBI:136634"/>
    </reaction>
    <physiologicalReaction direction="left-to-right" evidence="2">
        <dbReference type="Rhea" id="RHEA:52477"/>
    </physiologicalReaction>
</comment>
<comment type="catalytic activity">
    <reaction evidence="2">
        <text>chenodeoxycholate + UDP-alpha-D-glucuronate = chenodeoxycholoyl-24-O-(beta-D-glucuronate) + UDP</text>
        <dbReference type="Rhea" id="RHEA:52940"/>
        <dbReference type="ChEBI" id="CHEBI:36234"/>
        <dbReference type="ChEBI" id="CHEBI:58052"/>
        <dbReference type="ChEBI" id="CHEBI:58223"/>
        <dbReference type="ChEBI" id="CHEBI:136899"/>
    </reaction>
    <physiologicalReaction direction="left-to-right" evidence="2">
        <dbReference type="Rhea" id="RHEA:52941"/>
    </physiologicalReaction>
</comment>
<comment type="catalytic activity">
    <reaction evidence="2">
        <text>deoxycholate + UDP-alpha-D-glucuronate = deoxycholoyl-24-O-(beta-D-glucuronate) + UDP</text>
        <dbReference type="Rhea" id="RHEA:52948"/>
        <dbReference type="ChEBI" id="CHEBI:23614"/>
        <dbReference type="ChEBI" id="CHEBI:58052"/>
        <dbReference type="ChEBI" id="CHEBI:58223"/>
        <dbReference type="ChEBI" id="CHEBI:136901"/>
    </reaction>
    <physiologicalReaction direction="left-to-right" evidence="2">
        <dbReference type="Rhea" id="RHEA:52949"/>
    </physiologicalReaction>
</comment>
<comment type="catalytic activity">
    <reaction evidence="2">
        <text>lithocholate + UDP-alpha-D-glucuronate = lithocholoyl-24-O-(beta-D-glucuronate) + UDP</text>
        <dbReference type="Rhea" id="RHEA:52952"/>
        <dbReference type="ChEBI" id="CHEBI:29744"/>
        <dbReference type="ChEBI" id="CHEBI:58052"/>
        <dbReference type="ChEBI" id="CHEBI:58223"/>
        <dbReference type="ChEBI" id="CHEBI:136902"/>
    </reaction>
    <physiologicalReaction direction="left-to-right" evidence="2">
        <dbReference type="Rhea" id="RHEA:52953"/>
    </physiologicalReaction>
</comment>
<comment type="catalytic activity">
    <reaction evidence="2">
        <text>hyodeoxycholate + UDP-alpha-D-glucuronate = hyodeoxycholoyl-24-O-(beta-D-glucuronate) + UDP</text>
        <dbReference type="Rhea" id="RHEA:52956"/>
        <dbReference type="ChEBI" id="CHEBI:58052"/>
        <dbReference type="ChEBI" id="CHEBI:58223"/>
        <dbReference type="ChEBI" id="CHEBI:58875"/>
        <dbReference type="ChEBI" id="CHEBI:136903"/>
    </reaction>
    <physiologicalReaction direction="left-to-right" evidence="2">
        <dbReference type="Rhea" id="RHEA:52957"/>
    </physiologicalReaction>
</comment>
<comment type="catalytic activity">
    <reaction evidence="2">
        <text>hyocholate + UDP-alpha-D-glucuronate = hyocholoyl-24-O-(beta-D-glucuronate) + UDP</text>
        <dbReference type="Rhea" id="RHEA:52960"/>
        <dbReference type="ChEBI" id="CHEBI:58052"/>
        <dbReference type="ChEBI" id="CHEBI:58223"/>
        <dbReference type="ChEBI" id="CHEBI:133661"/>
        <dbReference type="ChEBI" id="CHEBI:136904"/>
    </reaction>
    <physiologicalReaction direction="left-to-right" evidence="2">
        <dbReference type="Rhea" id="RHEA:52961"/>
    </physiologicalReaction>
</comment>
<comment type="catalytic activity">
    <reaction evidence="2">
        <text>calcidiol + UDP-alpha-D-glucuronate = calcidiol 25-O-(beta-D-glucuronide) + UDP + H(+)</text>
        <dbReference type="Rhea" id="RHEA:55840"/>
        <dbReference type="ChEBI" id="CHEBI:15378"/>
        <dbReference type="ChEBI" id="CHEBI:17933"/>
        <dbReference type="ChEBI" id="CHEBI:58052"/>
        <dbReference type="ChEBI" id="CHEBI:58223"/>
        <dbReference type="ChEBI" id="CHEBI:139277"/>
    </reaction>
    <physiologicalReaction direction="left-to-right" evidence="2">
        <dbReference type="Rhea" id="RHEA:55841"/>
    </physiologicalReaction>
</comment>
<comment type="catalytic activity">
    <reaction evidence="2">
        <text>losartan + UDP-alpha-D-glucuronate = losartan-2-N-beta-D-glucuronide + UDP</text>
        <dbReference type="Rhea" id="RHEA:63720"/>
        <dbReference type="ChEBI" id="CHEBI:58052"/>
        <dbReference type="ChEBI" id="CHEBI:58223"/>
        <dbReference type="ChEBI" id="CHEBI:149504"/>
        <dbReference type="ChEBI" id="CHEBI:149507"/>
    </reaction>
    <physiologicalReaction direction="left-to-right" evidence="2">
        <dbReference type="Rhea" id="RHEA:63721"/>
    </physiologicalReaction>
</comment>
<comment type="catalytic activity">
    <reaction evidence="2">
        <text>candesartan + UDP-alpha-D-glucuronate = candesartan-2-N-beta-D-glucuronide + UDP</text>
        <dbReference type="Rhea" id="RHEA:63728"/>
        <dbReference type="ChEBI" id="CHEBI:58052"/>
        <dbReference type="ChEBI" id="CHEBI:58223"/>
        <dbReference type="ChEBI" id="CHEBI:149509"/>
        <dbReference type="ChEBI" id="CHEBI:149523"/>
    </reaction>
    <physiologicalReaction direction="left-to-right" evidence="2">
        <dbReference type="Rhea" id="RHEA:63729"/>
    </physiologicalReaction>
</comment>
<comment type="catalytic activity">
    <reaction evidence="2">
        <text>zolasartan + UDP-alpha-D-glucuronate = zolarsartan-2-N-beta-D-glucuronide + UDP</text>
        <dbReference type="Rhea" id="RHEA:63748"/>
        <dbReference type="ChEBI" id="CHEBI:58052"/>
        <dbReference type="ChEBI" id="CHEBI:58223"/>
        <dbReference type="ChEBI" id="CHEBI:149524"/>
        <dbReference type="ChEBI" id="CHEBI:149528"/>
    </reaction>
    <physiologicalReaction direction="left-to-right" evidence="2">
        <dbReference type="Rhea" id="RHEA:63749"/>
    </physiologicalReaction>
</comment>
<comment type="catalytic activity">
    <reaction evidence="2">
        <text>(E)-ferulate + UDP-alpha-D-glucuronate = (E)-4-O-(beta-D-glucuronosyl)-ferulate + UDP + H(+)</text>
        <dbReference type="Rhea" id="RHEA:79951"/>
        <dbReference type="ChEBI" id="CHEBI:15378"/>
        <dbReference type="ChEBI" id="CHEBI:29749"/>
        <dbReference type="ChEBI" id="CHEBI:58052"/>
        <dbReference type="ChEBI" id="CHEBI:58223"/>
        <dbReference type="ChEBI" id="CHEBI:231331"/>
    </reaction>
    <physiologicalReaction direction="left-to-right" evidence="2">
        <dbReference type="Rhea" id="RHEA:79952"/>
    </physiologicalReaction>
</comment>
<comment type="catalytic activity">
    <reaction evidence="2">
        <text>(E)-ferulate + UDP-alpha-D-glucuronate = (E)-ferulic acid beta-D-glucuronate ester + UDP</text>
        <dbReference type="Rhea" id="RHEA:79955"/>
        <dbReference type="ChEBI" id="CHEBI:29749"/>
        <dbReference type="ChEBI" id="CHEBI:58052"/>
        <dbReference type="ChEBI" id="CHEBI:58223"/>
        <dbReference type="ChEBI" id="CHEBI:231332"/>
    </reaction>
    <physiologicalReaction direction="left-to-right" evidence="2">
        <dbReference type="Rhea" id="RHEA:79956"/>
    </physiologicalReaction>
</comment>
<comment type="subunit">
    <text evidence="2">Homodimers. Homooligomer. Interacts with UGT1A1, UGT1A4, UGT1A6, UGT1A7, UGT1A8, UGT1A9 and UGT1A10 to form heterodimers.</text>
</comment>
<comment type="subcellular location">
    <subcellularLocation>
        <location evidence="1 2">Endoplasmic reticulum membrane</location>
        <topology evidence="3">Single-pass membrane protein</topology>
    </subcellularLocation>
</comment>
<comment type="alternative products">
    <event type="alternative splicing"/>
    <isoform>
        <id>Q64637-1</id>
        <name>1</name>
        <sequence type="displayed"/>
    </isoform>
    <text evidence="2">UGT1A3 is one of the isoforms produced at the UGT1A complex locus. The UGT1A complex locus produces different isoforms based on alternative use of promoters, first exons and terminal exons.</text>
</comment>
<comment type="similarity">
    <text evidence="4">Belongs to the UDP-glycosyltransferase family.</text>
</comment>
<accession>Q64637</accession>
<name>UD13_RAT</name>
<reference key="1">
    <citation type="journal article" date="1995" name="J. Biochem.">
        <title>Drug-responsive and tissue-specific alternative expression of multiple first exons in rat UDP-glucuronosyltransferase family 1 (UGT1) gene complex.</title>
        <authorList>
            <person name="Emi Y."/>
            <person name="Ikushiro S."/>
            <person name="Iyanagi T."/>
        </authorList>
    </citation>
    <scope>NUCLEOTIDE SEQUENCE [GENOMIC DNA] OF 1-286</scope>
    <source>
        <strain>Wistar</strain>
    </source>
</reference>
<reference key="2">
    <citation type="journal article" date="1990" name="Biochem. Biophys. Res. Commun.">
        <title>Isolation and sequencing of rat liver bilirubin UDP-glucuronosyltransferase cDNA: possible alternate splicing of a common primary transcript.</title>
        <authorList>
            <person name="Sato H."/>
            <person name="Koiwai O."/>
            <person name="Tanabe K."/>
            <person name="Kashiwamata S."/>
        </authorList>
    </citation>
    <scope>NUCLEOTIDE SEQUENCE [MRNA] OF 287-531</scope>
    <source>
        <tissue>Liver</tissue>
    </source>
</reference>
<feature type="signal peptide" evidence="3">
    <location>
        <begin position="1"/>
        <end position="25"/>
    </location>
</feature>
<feature type="chain" id="PRO_0000036014" description="UDP-glucuronosyltransferase 1A3">
    <location>
        <begin position="26"/>
        <end position="531"/>
    </location>
</feature>
<feature type="transmembrane region" description="Helical" evidence="3">
    <location>
        <begin position="489"/>
        <end position="505"/>
    </location>
</feature>
<feature type="glycosylation site" description="N-linked (GlcNAc...) asparagine" evidence="3">
    <location>
        <position position="116"/>
    </location>
</feature>
<feature type="glycosylation site" description="N-linked (GlcNAc...) asparagine" evidence="3">
    <location>
        <position position="139"/>
    </location>
</feature>
<feature type="glycosylation site" description="N-linked (GlcNAc...) asparagine" evidence="3">
    <location>
        <position position="293"/>
    </location>
</feature>
<feature type="glycosylation site" description="N-linked (GlcNAc...) asparagine" evidence="3">
    <location>
        <position position="431"/>
    </location>
</feature>
<sequence>MGIQGFLQKLSGLLLLLCALPWAEGGKVLVFPMEGSHWLSIRDVVRELHARGHQAVVLAPEVTVHIKEEDFFTLQTYPVPYTKEEYRHHLLGHLQNFFETEFSLKLVLQTMAAVNNVSTFYVRSCRGLLHNTALIQSLNSSSFDVVLTDPFFPCGAVLAMYLRVPAVFFLQSMLCELEFEATNSPNPSSYIPRLLTLNSDHMSFLDRVKNMLYPVPWMYLCHVNYGSLARLASDLLQREVSVVEILRHASVWLLRKDFVFHYPRPFMPNMVFIGGINCANRKPLSQEFEAYVNASGEHGIVVFSLGSMVSEIPEKKAMEIAEALGRIPQTLLWRYTGTRPSNLAKNTILVKWLPQNDLLGHPKARAFITHSGSHGIYEGICNGVPMVMMPLFGDQMDNAKRMETRGAGVTLNVLEMTADDLENALKTVINNKSYKENIMRLSSLHKDRPIEPLDLAVFWVEYVMRHKGAPHLRPAAHDLTWYQYHSLDVIGFLLAIVLTVVFIVYKSCAYGCRKCFGGKGRVKKSHKSKTH</sequence>
<keyword id="KW-0025">Alternative splicing</keyword>
<keyword id="KW-0256">Endoplasmic reticulum</keyword>
<keyword id="KW-0325">Glycoprotein</keyword>
<keyword id="KW-0328">Glycosyltransferase</keyword>
<keyword id="KW-0443">Lipid metabolism</keyword>
<keyword id="KW-0472">Membrane</keyword>
<keyword id="KW-1185">Reference proteome</keyword>
<keyword id="KW-0732">Signal</keyword>
<keyword id="KW-0808">Transferase</keyword>
<keyword id="KW-0812">Transmembrane</keyword>
<keyword id="KW-1133">Transmembrane helix</keyword>
<evidence type="ECO:0000250" key="1">
    <source>
        <dbReference type="UniProtKB" id="P22309"/>
    </source>
</evidence>
<evidence type="ECO:0000250" key="2">
    <source>
        <dbReference type="UniProtKB" id="P35503"/>
    </source>
</evidence>
<evidence type="ECO:0000255" key="3"/>
<evidence type="ECO:0000305" key="4"/>
<evidence type="ECO:0000312" key="5">
    <source>
        <dbReference type="RGD" id="1549728"/>
    </source>
</evidence>